<sequence length="184" mass="21326">MRSKFKDEHPFEKRKAEAERIRQKYPDRIPVICEKADRTDIPTIDKKKYLVPSDLTVGQFVYVIRKRIKLAPEKAIFIFVDEVLPPTAALMSAIYEEHKDEDNFLYVSYSGENTFGQEGWVELPVDDMDKAFICVSAAKKHWVWVLCDVRSSYQNCVLIVPLVQRPVLHTHSSFLSVSFALLFV</sequence>
<protein>
    <recommendedName>
        <fullName>Autophagy-related protein 8</fullName>
    </recommendedName>
    <alternativeName>
        <fullName>Autophagy-related ubiquitin-like modifier ATG8</fullName>
    </alternativeName>
</protein>
<evidence type="ECO:0000250" key="1">
    <source>
        <dbReference type="UniProtKB" id="P38182"/>
    </source>
</evidence>
<evidence type="ECO:0000305" key="2"/>
<keyword id="KW-0072">Autophagy</keyword>
<keyword id="KW-0968">Cytoplasmic vesicle</keyword>
<keyword id="KW-0449">Lipoprotein</keyword>
<keyword id="KW-0472">Membrane</keyword>
<keyword id="KW-0653">Protein transport</keyword>
<keyword id="KW-0813">Transport</keyword>
<keyword id="KW-0833">Ubl conjugation pathway</keyword>
<keyword id="KW-0926">Vacuole</keyword>
<comment type="function">
    <text evidence="1">Ubiquitin-like modifier involved in autophagosome formation. With ATG4, mediates the delivery of the autophagosomes to the vacuole via the microtubule cytoskeleton. Required for selective autophagic degradation of the nucleus (nucleophagy) as well as for mitophagy which contributes to regulate mitochondrial quantity and quality by eliminating the mitochondria to a basal level to fulfill cellular energy requirements and preventing excess ROS production. Participates also in membrane fusion events that take place in the early secretory pathway. Also involved in endoplasmic reticulum-specific autophagic process and is essential for the survival of cells subjected to severe ER stress. The ATG8-PE conjugate mediates tethering between adjacent membranes and stimulates membrane hemifusion, leading to expansion of the autophagosomal membrane during autophagy.</text>
</comment>
<comment type="subcellular location">
    <subcellularLocation>
        <location evidence="1">Cytoplasmic vesicle</location>
        <location evidence="1">Autophagosome membrane</location>
        <topology evidence="1">Lipid-anchor</topology>
    </subcellularLocation>
    <subcellularLocation>
        <location evidence="1">Vacuole membrane</location>
        <topology evidence="1">Lipid-anchor</topology>
    </subcellularLocation>
</comment>
<comment type="PTM">
    <text evidence="1">The C-terminal 68 residues are removed to expose Gly-116 at the C-terminus. The C-terminal Gly is then amidated with phosphatidylethanolamine by an activating system similar to that for ubiquitin.</text>
</comment>
<comment type="similarity">
    <text evidence="2">Belongs to the ATG8 family.</text>
</comment>
<comment type="sequence caution" evidence="2">
    <conflict type="erroneous initiation">
        <sequence resource="EMBL-CDS" id="AAB53650"/>
    </conflict>
</comment>
<organism>
    <name type="scientific">Laccaria bicolor</name>
    <name type="common">Bicoloured deceiver</name>
    <name type="synonym">Laccaria laccata var. bicolor</name>
    <dbReference type="NCBI Taxonomy" id="29883"/>
    <lineage>
        <taxon>Eukaryota</taxon>
        <taxon>Fungi</taxon>
        <taxon>Dikarya</taxon>
        <taxon>Basidiomycota</taxon>
        <taxon>Agaricomycotina</taxon>
        <taxon>Agaricomycetes</taxon>
        <taxon>Agaricomycetidae</taxon>
        <taxon>Agaricales</taxon>
        <taxon>Agaricineae</taxon>
        <taxon>Hydnangiaceae</taxon>
        <taxon>Laccaria</taxon>
    </lineage>
</organism>
<feature type="chain" id="PRO_0000017222" description="Autophagy-related protein 8">
    <location>
        <begin position="1"/>
        <end position="116"/>
    </location>
</feature>
<feature type="propeptide" id="PRO_0000017223" description="Removed in mature form" evidence="1">
    <location>
        <begin position="117"/>
        <end position="184"/>
    </location>
</feature>
<feature type="site" description="Cleavage; by ATG4" evidence="1">
    <location>
        <begin position="116"/>
        <end position="117"/>
    </location>
</feature>
<feature type="lipid moiety-binding region" description="Phosphatidylethanolamine amidated glycine" evidence="1">
    <location>
        <position position="116"/>
    </location>
</feature>
<name>ATG8_LACBI</name>
<proteinExistence type="evidence at transcript level"/>
<accession>P87068</accession>
<dbReference type="EMBL" id="U93506">
    <property type="protein sequence ID" value="AAB53650.1"/>
    <property type="status" value="ALT_INIT"/>
    <property type="molecule type" value="mRNA"/>
</dbReference>
<dbReference type="SMR" id="P87068"/>
<dbReference type="GO" id="GO:0000421">
    <property type="term" value="C:autophagosome membrane"/>
    <property type="evidence" value="ECO:0007669"/>
    <property type="project" value="UniProtKB-SubCell"/>
</dbReference>
<dbReference type="GO" id="GO:0031410">
    <property type="term" value="C:cytoplasmic vesicle"/>
    <property type="evidence" value="ECO:0007669"/>
    <property type="project" value="UniProtKB-KW"/>
</dbReference>
<dbReference type="GO" id="GO:0006914">
    <property type="term" value="P:autophagy"/>
    <property type="evidence" value="ECO:0007669"/>
    <property type="project" value="UniProtKB-KW"/>
</dbReference>
<dbReference type="GO" id="GO:0015031">
    <property type="term" value="P:protein transport"/>
    <property type="evidence" value="ECO:0007669"/>
    <property type="project" value="UniProtKB-KW"/>
</dbReference>
<dbReference type="CDD" id="cd16128">
    <property type="entry name" value="Ubl_ATG8"/>
    <property type="match status" value="1"/>
</dbReference>
<dbReference type="FunFam" id="3.10.20.90:FF:000010">
    <property type="entry name" value="Autophagy-related protein"/>
    <property type="match status" value="1"/>
</dbReference>
<dbReference type="Gene3D" id="3.10.20.90">
    <property type="entry name" value="Phosphatidylinositol 3-kinase Catalytic Subunit, Chain A, domain 1"/>
    <property type="match status" value="1"/>
</dbReference>
<dbReference type="InterPro" id="IPR004241">
    <property type="entry name" value="Atg8-like"/>
</dbReference>
<dbReference type="InterPro" id="IPR029071">
    <property type="entry name" value="Ubiquitin-like_domsf"/>
</dbReference>
<dbReference type="PANTHER" id="PTHR10969">
    <property type="entry name" value="MICROTUBULE-ASSOCIATED PROTEINS 1A/1B LIGHT CHAIN 3-RELATED"/>
    <property type="match status" value="1"/>
</dbReference>
<dbReference type="Pfam" id="PF02991">
    <property type="entry name" value="ATG8"/>
    <property type="match status" value="1"/>
</dbReference>
<dbReference type="SUPFAM" id="SSF54236">
    <property type="entry name" value="Ubiquitin-like"/>
    <property type="match status" value="1"/>
</dbReference>
<gene>
    <name type="primary">ATG8</name>
    <name type="synonym">AUT7</name>
</gene>
<reference key="1">
    <citation type="journal article" date="1999" name="J. Bacteriol.">
        <title>LB-AUT7, a novel symbiosis-regulated gene from an ectomycorrhizal fungus, Laccaria bicolor, is functionally related to vesicular transport and autophagocytosis.</title>
        <authorList>
            <person name="Kim S.-J."/>
            <person name="Bernreuther D."/>
            <person name="Thumm M."/>
            <person name="Podila G.K."/>
        </authorList>
    </citation>
    <scope>NUCLEOTIDE SEQUENCE [MRNA]</scope>
    <scope>FUNCTION</scope>
    <source>
        <strain>DR170</strain>
    </source>
</reference>